<organism>
    <name type="scientific">Schistocerca gregaria</name>
    <name type="common">Desert locust</name>
    <name type="synonym">Gryllus gregarius</name>
    <dbReference type="NCBI Taxonomy" id="7010"/>
    <lineage>
        <taxon>Eukaryota</taxon>
        <taxon>Metazoa</taxon>
        <taxon>Ecdysozoa</taxon>
        <taxon>Arthropoda</taxon>
        <taxon>Hexapoda</taxon>
        <taxon>Insecta</taxon>
        <taxon>Pterygota</taxon>
        <taxon>Neoptera</taxon>
        <taxon>Polyneoptera</taxon>
        <taxon>Orthoptera</taxon>
        <taxon>Caelifera</taxon>
        <taxon>Acrididea</taxon>
        <taxon>Acridomorpha</taxon>
        <taxon>Acridoidea</taxon>
        <taxon>Acrididae</taxon>
        <taxon>Cyrtacanthacridinae</taxon>
        <taxon>Schistocerca</taxon>
    </lineage>
</organism>
<dbReference type="PDB" id="4GI3">
    <property type="method" value="X-ray"/>
    <property type="resolution" value="1.75 A"/>
    <property type="chains" value="C=1-83"/>
</dbReference>
<dbReference type="PDBsum" id="4GI3"/>
<dbReference type="SMR" id="P85064"/>
<dbReference type="IntAct" id="P85064">
    <property type="interactions" value="1"/>
</dbReference>
<dbReference type="MINT" id="P85064"/>
<dbReference type="MEROPS" id="I01.059"/>
<dbReference type="iPTMnet" id="P85064"/>
<dbReference type="EnsemblMetazoa" id="XM_049996542.1">
    <property type="protein sequence ID" value="XP_049852499.1"/>
    <property type="gene ID" value="LOC126332010"/>
</dbReference>
<dbReference type="OrthoDB" id="88467at2759"/>
<dbReference type="GO" id="GO:0004867">
    <property type="term" value="F:serine-type endopeptidase inhibitor activity"/>
    <property type="evidence" value="ECO:0007669"/>
    <property type="project" value="UniProtKB-KW"/>
</dbReference>
<dbReference type="Gene3D" id="3.30.60.30">
    <property type="match status" value="1"/>
</dbReference>
<dbReference type="InterPro" id="IPR036058">
    <property type="entry name" value="Kazal_dom_sf"/>
</dbReference>
<dbReference type="SUPFAM" id="SSF100895">
    <property type="entry name" value="Kazal-type serine protease inhibitors"/>
    <property type="match status" value="1"/>
</dbReference>
<reference key="1">
    <citation type="journal article" date="2006" name="Biochem. J.">
        <title>A novel locust (Schistocerca gregaria) serine protease inhibitor with a high affinity for neutrophil elastase.</title>
        <authorList>
            <person name="Brillard-Bourdet M."/>
            <person name="Hamdaoui A."/>
            <person name="Hajjar E."/>
            <person name="Boudier C."/>
            <person name="Reuter N."/>
            <person name="Ehret-Sabatier L."/>
            <person name="Bieth J.G."/>
            <person name="Gauthier F."/>
        </authorList>
    </citation>
    <scope>PROTEIN SEQUENCE</scope>
    <scope>FUNCTION</scope>
    <scope>BIOPHYSICOCHEMICAL PROPERTIES</scope>
    <scope>PHOSPHORYLATION AT SER-8; SER-11 AND SER-15</scope>
    <source>
        <tissue evidence="1">Ovary</tissue>
    </source>
</reference>
<reference key="2">
    <citation type="journal article" date="2012" name="FEBS J.">
        <title>Crystal structure of greglin, a novel non-classical Kazal inhibitor, in complex with subtilisin.</title>
        <authorList>
            <person name="Derache C."/>
            <person name="Epinette C."/>
            <person name="Roussel A."/>
            <person name="Gabant G."/>
            <person name="Cadene M."/>
            <person name="Korkmaz B."/>
            <person name="Gauthier F."/>
            <person name="Kellenberger C."/>
        </authorList>
    </citation>
    <scope>PROTEIN SEQUENCE</scope>
    <scope>FUNCTION</scope>
    <scope>BIOPHYSICOCHEMICAL PROPERTIES</scope>
    <scope>MASS SPECTROMETRY</scope>
    <scope>DISULFIDE BONDS</scope>
    <scope>PHOSPHORYLATION AT SER-8</scope>
    <scope>X-RAY CRYSTALLOGRAPHY (1.75 ANGSTROMS) OF 21-78 IN COMPLEX WITH SUBTILISIN</scope>
    <source>
        <tissue evidence="3">Ovary</tissue>
    </source>
</reference>
<sequence length="83" mass="9195">SEDDGSASPESQEMSYTELPCPSICPLIYAPVCVEDSNQDFYLFVNECEVRKCGCEAGFVYTFVPREMCKATTSLCPMQTKSS</sequence>
<comment type="function">
    <text evidence="1 2">Serine protease inhibitor (PubMed:16839309, PubMed:23075397). Inhibits porcine pancreatic elastase with a Ki of 58.3 nM, human neutrophil elastase with a Ki of 3.6 nM, cathepsin G with a Ki of 153.5 nM, chymotrypsin with a Ki of 26.7 nM and subtilisin with a Ki of 0.68 nM. Does not inhibit neutrophil protease 3 or pancreatic trypsin (PubMed:16839309).</text>
</comment>
<comment type="biophysicochemical properties">
    <phDependence>
        <text evidence="1 2">No decrease in activity observed after incubating at pH 2.5, pH 7.4 and at pH 11.0 for 1 hour to overnight (PubMed:16839309, PubMed:23075397).</text>
    </phDependence>
    <temperatureDependence>
        <text evidence="1 2">Thermostable (PubMed:16839309, PubMed:23075397). No decrease in activity was observed after heating for 1 hour at up to 95 degrees Celsius (PubMed:16839309, PubMed:23075397).</text>
    </temperatureDependence>
</comment>
<comment type="mass spectrometry" mass="9661.13" method="Electrospray" evidence="2"/>
<comment type="mass spectrometry" mass="9733.08" method="Electrospray" evidence="2">
    <text>Mono-phosphorylated form.</text>
</comment>
<comment type="mass spectrometry" mass="9813.06" method="Electrospray" evidence="2">
    <text>Di-phosphorylated form.</text>
</comment>
<comment type="mass spectrometry" mass="9893.04" method="Electrospray" evidence="2">
    <text>Tri-phosphorylated form.</text>
</comment>
<accession>P85064</accession>
<proteinExistence type="evidence at protein level"/>
<evidence type="ECO:0000269" key="1">
    <source>
    </source>
</evidence>
<evidence type="ECO:0000269" key="2">
    <source>
    </source>
</evidence>
<evidence type="ECO:0000303" key="3">
    <source>
    </source>
</evidence>
<evidence type="ECO:0000305" key="4"/>
<evidence type="ECO:0007829" key="5">
    <source>
        <dbReference type="PDB" id="4GI3"/>
    </source>
</evidence>
<feature type="chain" id="PRO_0000271408" description="Greglin">
    <location>
        <begin position="1"/>
        <end position="83"/>
    </location>
</feature>
<feature type="modified residue" description="Phosphoserine" evidence="1 2">
    <location>
        <position position="8"/>
    </location>
</feature>
<feature type="modified residue" description="Phosphoserine" evidence="1">
    <location>
        <position position="11"/>
    </location>
</feature>
<feature type="modified residue" description="Phosphoserine" evidence="1">
    <location>
        <position position="15"/>
    </location>
</feature>
<feature type="disulfide bond" evidence="2">
    <location>
        <begin position="21"/>
        <end position="55"/>
    </location>
</feature>
<feature type="disulfide bond" evidence="2">
    <location>
        <begin position="25"/>
        <end position="48"/>
    </location>
</feature>
<feature type="disulfide bond" evidence="2">
    <location>
        <begin position="33"/>
        <end position="69"/>
    </location>
</feature>
<feature type="disulfide bond" evidence="2">
    <location>
        <begin position="53"/>
        <end position="76"/>
    </location>
</feature>
<feature type="sequence conflict" description="In Ref. 1; AA sequence." evidence="4" ref="1">
    <original>A</original>
    <variation>V</variation>
    <location>
        <position position="7"/>
    </location>
</feature>
<feature type="sequence conflict" description="In Ref. 1; AA sequence." evidence="4" ref="1">
    <original>TELPCPSIC</original>
    <variation>LELPLPSIS</variation>
    <location>
        <begin position="17"/>
        <end position="25"/>
    </location>
</feature>
<feature type="sequence conflict" description="In Ref. 1; AA sequence." evidence="4" ref="1">
    <original>Q</original>
    <variation>S</variation>
    <location>
        <position position="39"/>
    </location>
</feature>
<feature type="strand" evidence="5">
    <location>
        <begin position="24"/>
        <end position="26"/>
    </location>
</feature>
<feature type="strand" evidence="5">
    <location>
        <begin position="32"/>
        <end position="36"/>
    </location>
</feature>
<feature type="strand" evidence="5">
    <location>
        <begin position="41"/>
        <end position="46"/>
    </location>
</feature>
<feature type="helix" evidence="5">
    <location>
        <begin position="47"/>
        <end position="57"/>
    </location>
</feature>
<feature type="strand" evidence="5">
    <location>
        <begin position="61"/>
        <end position="63"/>
    </location>
</feature>
<feature type="helix" evidence="5">
    <location>
        <begin position="66"/>
        <end position="68"/>
    </location>
</feature>
<protein>
    <recommendedName>
        <fullName>Greglin</fullName>
    </recommendedName>
</protein>
<name>SPI_SCHGR</name>
<keyword id="KW-0002">3D-structure</keyword>
<keyword id="KW-0903">Direct protein sequencing</keyword>
<keyword id="KW-1015">Disulfide bond</keyword>
<keyword id="KW-0597">Phosphoprotein</keyword>
<keyword id="KW-0646">Protease inhibitor</keyword>
<keyword id="KW-0722">Serine protease inhibitor</keyword>